<evidence type="ECO:0000255" key="1">
    <source>
        <dbReference type="PROSITE-ProRule" id="PRU00277"/>
    </source>
</evidence>
<evidence type="ECO:0000256" key="2">
    <source>
        <dbReference type="SAM" id="MobiDB-lite"/>
    </source>
</evidence>
<proteinExistence type="predicted"/>
<sequence length="331" mass="36685">MQKFLSLIIVILILYNIVKLKISPDNNNPTTIEQTASNNSSTDENQTSINNEPHISLNGNLFERTVSKIVINALKTEEGKAFFENILQPLNGPINPNDYTIEVRKDLVKTLFKINTLGSGNIGPASCGHVVTVFYQISDMNNTLISEDTKTFTLGSAPVMLGLDNVIIGMMVGEAREAIIPAKYAVNNSKNIIFDDAYNYKVNVILKSILPQNFVKNNEVKIYDDEIAYRVPLLCGEKVSFNAKITRLSNGKILYDSKAKGQQIDMKIGDITYPLIFSYALQGKVTVGTRSVIAEGKTFKALGSNINKIISHESLPINEYLLLELGDFKQN</sequence>
<dbReference type="EC" id="5.2.1.8"/>
<dbReference type="EMBL" id="CP000053">
    <property type="protein sequence ID" value="AAY61467.1"/>
    <property type="molecule type" value="Genomic_DNA"/>
</dbReference>
<dbReference type="SMR" id="Q4ULV6"/>
<dbReference type="STRING" id="315456.RF_0616"/>
<dbReference type="KEGG" id="rfe:RF_0616"/>
<dbReference type="eggNOG" id="COG0545">
    <property type="taxonomic scope" value="Bacteria"/>
</dbReference>
<dbReference type="HOGENOM" id="CLU_839076_0_0_5"/>
<dbReference type="OrthoDB" id="7160669at2"/>
<dbReference type="Proteomes" id="UP000008548">
    <property type="component" value="Chromosome"/>
</dbReference>
<dbReference type="GO" id="GO:0003755">
    <property type="term" value="F:peptidyl-prolyl cis-trans isomerase activity"/>
    <property type="evidence" value="ECO:0007669"/>
    <property type="project" value="UniProtKB-KW"/>
</dbReference>
<dbReference type="GO" id="GO:0006457">
    <property type="term" value="P:protein folding"/>
    <property type="evidence" value="ECO:0007669"/>
    <property type="project" value="UniProtKB-ARBA"/>
</dbReference>
<dbReference type="Gene3D" id="3.10.50.40">
    <property type="match status" value="1"/>
</dbReference>
<dbReference type="InterPro" id="IPR046357">
    <property type="entry name" value="PPIase_dom_sf"/>
</dbReference>
<dbReference type="InterPro" id="IPR001179">
    <property type="entry name" value="PPIase_FKBP_dom"/>
</dbReference>
<dbReference type="Pfam" id="PF00254">
    <property type="entry name" value="FKBP_C"/>
    <property type="match status" value="1"/>
</dbReference>
<dbReference type="SUPFAM" id="SSF54534">
    <property type="entry name" value="FKBP-like"/>
    <property type="match status" value="1"/>
</dbReference>
<dbReference type="PROSITE" id="PS50059">
    <property type="entry name" value="FKBP_PPIASE"/>
    <property type="match status" value="1"/>
</dbReference>
<gene>
    <name type="ordered locus">RF_0616</name>
</gene>
<name>Y616_RICFE</name>
<feature type="chain" id="PRO_0000279682" description="Putative peptidyl-prolyl cis-trans isomerase RF_0616">
    <location>
        <begin position="1"/>
        <end position="331"/>
    </location>
</feature>
<feature type="domain" description="PPIase FKBP-type" evidence="1">
    <location>
        <begin position="128"/>
        <end position="226"/>
    </location>
</feature>
<feature type="region of interest" description="Disordered" evidence="2">
    <location>
        <begin position="28"/>
        <end position="50"/>
    </location>
</feature>
<protein>
    <recommendedName>
        <fullName>Putative peptidyl-prolyl cis-trans isomerase RF_0616</fullName>
        <shortName>PPIase RF_0616</shortName>
        <ecNumber>5.2.1.8</ecNumber>
    </recommendedName>
    <alternativeName>
        <fullName>Rotamase RF_0616</fullName>
    </alternativeName>
</protein>
<reference key="1">
    <citation type="journal article" date="2005" name="PLoS Biol.">
        <title>The genome sequence of Rickettsia felis identifies the first putative conjugative plasmid in an obligate intracellular parasite.</title>
        <authorList>
            <person name="Ogata H."/>
            <person name="Renesto P."/>
            <person name="Audic S."/>
            <person name="Robert C."/>
            <person name="Blanc G."/>
            <person name="Fournier P.-E."/>
            <person name="Parinello H."/>
            <person name="Claverie J.-M."/>
            <person name="Raoult D."/>
        </authorList>
    </citation>
    <scope>NUCLEOTIDE SEQUENCE [LARGE SCALE GENOMIC DNA]</scope>
    <source>
        <strain>ATCC VR-1525 / URRWXCal2</strain>
    </source>
</reference>
<comment type="catalytic activity">
    <reaction>
        <text>[protein]-peptidylproline (omega=180) = [protein]-peptidylproline (omega=0)</text>
        <dbReference type="Rhea" id="RHEA:16237"/>
        <dbReference type="Rhea" id="RHEA-COMP:10747"/>
        <dbReference type="Rhea" id="RHEA-COMP:10748"/>
        <dbReference type="ChEBI" id="CHEBI:83833"/>
        <dbReference type="ChEBI" id="CHEBI:83834"/>
        <dbReference type="EC" id="5.2.1.8"/>
    </reaction>
</comment>
<organism>
    <name type="scientific">Rickettsia felis (strain ATCC VR-1525 / URRWXCal2)</name>
    <name type="common">Rickettsia azadi</name>
    <dbReference type="NCBI Taxonomy" id="315456"/>
    <lineage>
        <taxon>Bacteria</taxon>
        <taxon>Pseudomonadati</taxon>
        <taxon>Pseudomonadota</taxon>
        <taxon>Alphaproteobacteria</taxon>
        <taxon>Rickettsiales</taxon>
        <taxon>Rickettsiaceae</taxon>
        <taxon>Rickettsieae</taxon>
        <taxon>Rickettsia</taxon>
        <taxon>spotted fever group</taxon>
    </lineage>
</organism>
<keyword id="KW-0413">Isomerase</keyword>
<keyword id="KW-0697">Rotamase</keyword>
<accession>Q4ULV6</accession>